<proteinExistence type="evidence at protein level"/>
<feature type="chain" id="PRO_0000270829" description="Cell division control protein 42 homolog">
    <location>
        <begin position="1"/>
        <end position="188"/>
    </location>
</feature>
<feature type="propeptide" id="PRO_0000270830" description="Removed in mature form" evidence="1">
    <location>
        <begin position="189"/>
        <end position="191"/>
    </location>
</feature>
<feature type="short sequence motif" description="Effector region" evidence="4">
    <location>
        <begin position="32"/>
        <end position="40"/>
    </location>
</feature>
<feature type="binding site" evidence="1">
    <location>
        <begin position="10"/>
        <end position="17"/>
    </location>
    <ligand>
        <name>GTP</name>
        <dbReference type="ChEBI" id="CHEBI:37565"/>
    </ligand>
</feature>
<feature type="binding site" evidence="1">
    <location>
        <begin position="57"/>
        <end position="61"/>
    </location>
    <ligand>
        <name>GTP</name>
        <dbReference type="ChEBI" id="CHEBI:37565"/>
    </ligand>
</feature>
<feature type="binding site" evidence="1">
    <location>
        <begin position="115"/>
        <end position="118"/>
    </location>
    <ligand>
        <name>GTP</name>
        <dbReference type="ChEBI" id="CHEBI:37565"/>
    </ligand>
</feature>
<feature type="modified residue" description="Phosphotyrosine; by SRC" evidence="3">
    <location>
        <position position="64"/>
    </location>
</feature>
<feature type="modified residue" description="Cysteine methyl ester" evidence="1">
    <location>
        <position position="188"/>
    </location>
</feature>
<feature type="lipid moiety-binding region" description="S-geranylgeranyl cysteine" evidence="1">
    <location>
        <position position="188"/>
    </location>
</feature>
<feature type="splice variant" id="VSP_022241" description="In isoform 2." evidence="7">
    <original>PKKSRRCVLL</original>
    <variation>TQPKRKCCIF</variation>
    <location>
        <begin position="182"/>
        <end position="191"/>
    </location>
</feature>
<feature type="sequence conflict" description="In Ref. 1; AAF15538 and 2; AAN63806." evidence="8" ref="1 2">
    <original>A</original>
    <variation>P</variation>
    <location>
        <position position="159"/>
    </location>
</feature>
<feature type="sequence conflict" description="In Ref. 1; AAF15538." evidence="8" ref="1">
    <original>K</original>
    <variation>R</variation>
    <location>
        <position position="163"/>
    </location>
</feature>
<evidence type="ECO:0000250" key="1"/>
<evidence type="ECO:0000250" key="2">
    <source>
        <dbReference type="UniProtKB" id="P60766"/>
    </source>
</evidence>
<evidence type="ECO:0000250" key="3">
    <source>
        <dbReference type="UniProtKB" id="P60953"/>
    </source>
</evidence>
<evidence type="ECO:0000255" key="4"/>
<evidence type="ECO:0000269" key="5">
    <source>
    </source>
</evidence>
<evidence type="ECO:0000269" key="6">
    <source>
    </source>
</evidence>
<evidence type="ECO:0000303" key="7">
    <source>
    </source>
</evidence>
<evidence type="ECO:0000305" key="8"/>
<evidence type="ECO:0000305" key="9">
    <source>
    </source>
</evidence>
<evidence type="ECO:0000305" key="10">
    <source>
    </source>
</evidence>
<evidence type="ECO:0000312" key="11">
    <source>
        <dbReference type="RGD" id="71043"/>
    </source>
</evidence>
<sequence>MQTIKCVVVGDGAVGKTCLLISYTTNKFPSEYVPTVFDNYAVTVMIGGEPYTLGLFDTAGQEDYDRLRPLSYPQTDVFLVCFSVVSPSSFENVKEKWVPEITHHCPKTPFLLVGTQIDLRDDPSTIEKLAKNKQKPITPETAEKLARDLKAVKYVECSALTQKGLKNVFDEAILAALEPPEPKKSRRCVLL</sequence>
<comment type="function">
    <text evidence="2 3 5 6">Plasma membrane-associated small GTPase which cycles between an active GTP-bound and an inactive GDP-bound state. In active state binds to a variety of effector proteins to regulate cellular responses (PubMed:25498153). Involved in epithelial cell polarization processes. Regulates the bipolar attachment of spindle microtubules to kinetochores before chromosome congression in metaphase (By similarity). Regulates cell migration (By similarity). In neurons, plays a role in the extension and maintenance of the formation of filopodia, thin and actin-rich surface projections (By similarity). Required for DOCK10-mediated spine formation in Purkinje cells and hippocampal neurons. Facilitates filopodia formation upon DOCK11-activation (By similarity). Upon activation by CaMKII, modulates dendritic spine structural plasticity by relaying CaMKII transient activation to synapse-specific, long-term signaling (PubMed:21423166, PubMed:25498153). Also plays a role in phagocytosis through organization of the F-actin cytoskeleton associated with forming phagocytic cups (By similarity). Upon activation by PLEKHG4B, involved in actin cytoskeletal remodeling during epithelial cell-cell junction formation (By similarity).</text>
</comment>
<comment type="catalytic activity">
    <reaction evidence="6">
        <text>GTP + H2O = GDP + phosphate + H(+)</text>
        <dbReference type="Rhea" id="RHEA:19669"/>
        <dbReference type="ChEBI" id="CHEBI:15377"/>
        <dbReference type="ChEBI" id="CHEBI:15378"/>
        <dbReference type="ChEBI" id="CHEBI:37565"/>
        <dbReference type="ChEBI" id="CHEBI:43474"/>
        <dbReference type="ChEBI" id="CHEBI:58189"/>
        <dbReference type="EC" id="3.6.5.2"/>
    </reaction>
    <physiologicalReaction direction="left-to-right" evidence="10">
        <dbReference type="Rhea" id="RHEA:19670"/>
    </physiologicalReaction>
</comment>
<comment type="activity regulation">
    <text evidence="6 8">Regulated by guanine nucleotide exchange factors (GEFs) which promote the exchange of bound GDP for free GTP, GTPase activating proteins (GAPs) which increase the GTP hydrolysis activity, and GDP dissociation inhibitors which inhibit the dissociation of the nucleotide from the GTPase (Probable). Inhibited by GAPs such as ARHGAP44 (PubMed:25498153).</text>
</comment>
<comment type="subunit">
    <text evidence="2 3">Interacts with CDC42EP1, CDC42EP2, CDC42EP3, CDC42EP4, CDC42EP5, CDC42SE1, CDC42SE2, PARD6A, PARD6B and PARD6G (in a GTP-dependent manner). Interacts with activated CSPG4 and with BAIAP2. Interacts with DOCK11/Zizimin2; the interaction activates CDC42 by exchanging GDP for GTP. Interacts with DOCK9; the interaction activates CDC42 by exchanging GDP for GTP. Interacts with DOCK8 (via DHR-2 domain); the interaction activates CDC42 by exchanging GDP for GTP. Interacts with IQGAP1. Interacts with NET1 and ARHGAP33/TCGAP. Part of a complex with PARD3, PARD6A or PARD6B and PRKCI or PRKCZ. The GTP-bound form interacts with CCPG1. Interacts with USP6. Interacts with NEK6. Part of a collagen stimulated complex involved in cell migration composed of CDC42, CRK, TNK2 and BCAR1/p130cas. Interacts with ITGB1BP1. Interacts with ARHGDIA; this interaction inactivates and stabilizes CDC42. Interacts with ARHGDIB; this maintains CDC42 in the inactive, GDP-bound form. Interacts in (GTP-bound form) with FNBP1L and ABI1, but only in the presence of FNBP1L. Interacts with MARCKS (By similarity). Interacts with CD151 and ITGB1 (By similarity).</text>
</comment>
<comment type="interaction">
    <interactant intactId="EBI-7023929">
        <id>Q8CFN2</id>
    </interactant>
    <interactant intactId="EBI-525456">
        <id>Q9UQB8</id>
        <label>BAIAP2</label>
    </interactant>
    <organismsDiffer>true</organismsDiffer>
    <experiments>2</experiments>
</comment>
<comment type="subcellular location">
    <subcellularLocation>
        <location evidence="2">Cell membrane</location>
        <topology evidence="2">Lipid-anchor</topology>
        <orientation evidence="2">Cytoplasmic side</orientation>
    </subcellularLocation>
    <subcellularLocation>
        <location evidence="3">Midbody</location>
    </subcellularLocation>
    <subcellularLocation>
        <location evidence="3">Cytoplasm</location>
        <location evidence="3">Cytoskeleton</location>
        <location evidence="3">Microtubule organizing center</location>
        <location evidence="3">Centrosome</location>
    </subcellularLocation>
    <subcellularLocation>
        <location evidence="3">Cytoplasm</location>
        <location evidence="3">Cytoskeleton</location>
        <location evidence="3">Spindle</location>
    </subcellularLocation>
    <subcellularLocation>
        <location evidence="2">Cytoplasm</location>
    </subcellularLocation>
    <subcellularLocation>
        <location evidence="2">Cell projection</location>
        <location evidence="2">Lamellipodium membrane</location>
        <topology evidence="2">Peripheral membrane protein</topology>
        <orientation evidence="2">Cytoplasmic side</orientation>
    </subcellularLocation>
    <subcellularLocation>
        <location evidence="9">Cell projection</location>
        <location evidence="9">Dendrite</location>
    </subcellularLocation>
    <text evidence="2 3">Localizes to spindle during prometaphase cells. Moves to the central spindle as cells progressed through anaphase to telophase. Localizes at the end of cytokinesis in the intercellular bridge formed between two daughter cells. Its localization is regulated by the activities of guanine nucleotide exchange factor ECT2 and GTPase activating protein RACGAP1. Colocalizes with NEK6 in the centrosome. In its active GTP-bound form localizes to the leading edge membrane of migrating dendritic cells.</text>
</comment>
<comment type="alternative products">
    <event type="alternative splicing"/>
    <isoform>
        <id>Q8CFN2-1</id>
        <name>1</name>
        <sequence type="displayed"/>
    </isoform>
    <isoform>
        <id>Q8CFN2-2</id>
        <name>2</name>
        <sequence type="described" ref="VSP_022241"/>
    </isoform>
</comment>
<comment type="PTM">
    <text evidence="1">Phosphorylated by SRC in an EGF-dependent manner, this stimulates the binding of the Rho-GDP dissociation inhibitor RhoGDI.</text>
</comment>
<comment type="similarity">
    <text evidence="8">Belongs to the small GTPase superfamily. Rho family. CDC42 subfamily.</text>
</comment>
<protein>
    <recommendedName>
        <fullName evidence="8">Cell division control protein 42 homolog</fullName>
        <ecNumber evidence="6">3.6.5.2</ecNumber>
    </recommendedName>
</protein>
<organism>
    <name type="scientific">Rattus norvegicus</name>
    <name type="common">Rat</name>
    <dbReference type="NCBI Taxonomy" id="10116"/>
    <lineage>
        <taxon>Eukaryota</taxon>
        <taxon>Metazoa</taxon>
        <taxon>Chordata</taxon>
        <taxon>Craniata</taxon>
        <taxon>Vertebrata</taxon>
        <taxon>Euteleostomi</taxon>
        <taxon>Mammalia</taxon>
        <taxon>Eutheria</taxon>
        <taxon>Euarchontoglires</taxon>
        <taxon>Glires</taxon>
        <taxon>Rodentia</taxon>
        <taxon>Myomorpha</taxon>
        <taxon>Muroidea</taxon>
        <taxon>Muridae</taxon>
        <taxon>Murinae</taxon>
        <taxon>Rattus</taxon>
    </lineage>
</organism>
<name>CDC42_RAT</name>
<dbReference type="EC" id="3.6.5.2" evidence="6"/>
<dbReference type="EMBL" id="AF205635">
    <property type="protein sequence ID" value="AAF15538.1"/>
    <property type="molecule type" value="mRNA"/>
</dbReference>
<dbReference type="EMBL" id="AF491841">
    <property type="protein sequence ID" value="AAN63806.1"/>
    <property type="molecule type" value="mRNA"/>
</dbReference>
<dbReference type="EMBL" id="BC060535">
    <property type="protein sequence ID" value="AAH60535.1"/>
    <property type="molecule type" value="mRNA"/>
</dbReference>
<dbReference type="RefSeq" id="NP_741991.3">
    <molecule id="Q8CFN2-1"/>
    <property type="nucleotide sequence ID" value="NM_171994.4"/>
</dbReference>
<dbReference type="RefSeq" id="XP_008762508.1">
    <molecule id="Q8CFN2-1"/>
    <property type="nucleotide sequence ID" value="XM_008764286.4"/>
</dbReference>
<dbReference type="RefSeq" id="XP_008762509.1">
    <property type="nucleotide sequence ID" value="XM_008764287.2"/>
</dbReference>
<dbReference type="RefSeq" id="XP_038966637.1">
    <molecule id="Q8CFN2-1"/>
    <property type="nucleotide sequence ID" value="XM_039110709.2"/>
</dbReference>
<dbReference type="RefSeq" id="XP_063144424.1">
    <molecule id="Q8CFN2-1"/>
    <property type="nucleotide sequence ID" value="XM_063288354.1"/>
</dbReference>
<dbReference type="SMR" id="Q8CFN2"/>
<dbReference type="BioGRID" id="249080">
    <property type="interactions" value="4"/>
</dbReference>
<dbReference type="CORUM" id="Q8CFN2"/>
<dbReference type="ELM" id="Q8CFN2"/>
<dbReference type="FunCoup" id="Q8CFN2">
    <property type="interactions" value="5000"/>
</dbReference>
<dbReference type="IntAct" id="Q8CFN2">
    <property type="interactions" value="5"/>
</dbReference>
<dbReference type="MINT" id="Q8CFN2"/>
<dbReference type="STRING" id="10116.ENSRNOP00000030928"/>
<dbReference type="ChEMBL" id="CHEMBL3308943"/>
<dbReference type="iPTMnet" id="Q8CFN2"/>
<dbReference type="PhosphoSitePlus" id="Q8CFN2"/>
<dbReference type="SwissPalm" id="Q8CFN2"/>
<dbReference type="jPOST" id="Q8CFN2"/>
<dbReference type="PaxDb" id="10116-ENSRNOP00000030928"/>
<dbReference type="Ensembl" id="ENSRNOT00000029025.6">
    <molecule id="Q8CFN2-1"/>
    <property type="protein sequence ID" value="ENSRNOP00000030928.2"/>
    <property type="gene ID" value="ENSRNOG00000013536.8"/>
</dbReference>
<dbReference type="GeneID" id="64465"/>
<dbReference type="KEGG" id="rno:64465"/>
<dbReference type="UCSC" id="RGD:71043">
    <molecule id="Q8CFN2-1"/>
    <property type="organism name" value="rat"/>
</dbReference>
<dbReference type="AGR" id="RGD:71043"/>
<dbReference type="CTD" id="998"/>
<dbReference type="RGD" id="71043">
    <property type="gene designation" value="Cdc42"/>
</dbReference>
<dbReference type="eggNOG" id="KOG0393">
    <property type="taxonomic scope" value="Eukaryota"/>
</dbReference>
<dbReference type="GeneTree" id="ENSGT00940000153675"/>
<dbReference type="HOGENOM" id="CLU_041217_21_3_1"/>
<dbReference type="InParanoid" id="Q8CFN2"/>
<dbReference type="OrthoDB" id="8830751at2759"/>
<dbReference type="PhylomeDB" id="Q8CFN2"/>
<dbReference type="TreeFam" id="TF101109"/>
<dbReference type="Reactome" id="R-RNO-114604">
    <property type="pathway name" value="GPVI-mediated activation cascade"/>
</dbReference>
<dbReference type="Reactome" id="R-RNO-182971">
    <property type="pathway name" value="EGFR downregulation"/>
</dbReference>
<dbReference type="Reactome" id="R-RNO-2029482">
    <property type="pathway name" value="Regulation of actin dynamics for phagocytic cup formation"/>
</dbReference>
<dbReference type="Reactome" id="R-RNO-389359">
    <property type="pathway name" value="CD28 dependent Vav1 pathway"/>
</dbReference>
<dbReference type="Reactome" id="R-RNO-3928662">
    <property type="pathway name" value="EPHB-mediated forward signaling"/>
</dbReference>
<dbReference type="Reactome" id="R-RNO-418885">
    <property type="pathway name" value="DCC mediated attractive signaling"/>
</dbReference>
<dbReference type="Reactome" id="R-RNO-4420097">
    <property type="pathway name" value="VEGFA-VEGFR2 Pathway"/>
</dbReference>
<dbReference type="Reactome" id="R-RNO-525793">
    <property type="pathway name" value="Myogenesis"/>
</dbReference>
<dbReference type="Reactome" id="R-RNO-5625970">
    <property type="pathway name" value="RHO GTPases activate KTN1"/>
</dbReference>
<dbReference type="Reactome" id="R-RNO-5626467">
    <property type="pathway name" value="RHO GTPases activate IQGAPs"/>
</dbReference>
<dbReference type="Reactome" id="R-RNO-5627123">
    <property type="pathway name" value="RHO GTPases activate PAKs"/>
</dbReference>
<dbReference type="Reactome" id="R-RNO-5663213">
    <property type="pathway name" value="RHO GTPases Activate WASPs and WAVEs"/>
</dbReference>
<dbReference type="Reactome" id="R-RNO-5663220">
    <property type="pathway name" value="RHO GTPases Activate Formins"/>
</dbReference>
<dbReference type="Reactome" id="R-RNO-5687128">
    <property type="pathway name" value="MAPK6/MAPK4 signaling"/>
</dbReference>
<dbReference type="Reactome" id="R-RNO-8964616">
    <property type="pathway name" value="G beta:gamma signalling through CDC42"/>
</dbReference>
<dbReference type="Reactome" id="R-RNO-9013148">
    <property type="pathway name" value="CDC42 GTPase cycle"/>
</dbReference>
<dbReference type="Reactome" id="R-RNO-9013149">
    <property type="pathway name" value="RAC1 GTPase cycle"/>
</dbReference>
<dbReference type="Reactome" id="R-RNO-9013404">
    <property type="pathway name" value="RAC2 GTPase cycle"/>
</dbReference>
<dbReference type="Reactome" id="R-RNO-9013406">
    <property type="pathway name" value="RHOQ GTPase cycle"/>
</dbReference>
<dbReference type="Reactome" id="R-RNO-9013408">
    <property type="pathway name" value="RHOG GTPase cycle"/>
</dbReference>
<dbReference type="Reactome" id="R-RNO-9013420">
    <property type="pathway name" value="RHOU GTPase cycle"/>
</dbReference>
<dbReference type="Reactome" id="R-RNO-9013424">
    <property type="pathway name" value="RHOV GTPase cycle"/>
</dbReference>
<dbReference type="Reactome" id="R-RNO-983231">
    <property type="pathway name" value="Factors involved in megakaryocyte development and platelet production"/>
</dbReference>
<dbReference type="PRO" id="PR:Q8CFN2"/>
<dbReference type="Proteomes" id="UP000002494">
    <property type="component" value="Chromosome 5"/>
</dbReference>
<dbReference type="Bgee" id="ENSRNOG00000013536">
    <property type="expression patterns" value="Expressed in cerebellum and 19 other cell types or tissues"/>
</dbReference>
<dbReference type="ExpressionAtlas" id="Q8CFN2">
    <property type="expression patterns" value="baseline and differential"/>
</dbReference>
<dbReference type="GO" id="GO:0045177">
    <property type="term" value="C:apical part of cell"/>
    <property type="evidence" value="ECO:0000266"/>
    <property type="project" value="RGD"/>
</dbReference>
<dbReference type="GO" id="GO:0031252">
    <property type="term" value="C:cell leading edge"/>
    <property type="evidence" value="ECO:0000266"/>
    <property type="project" value="RGD"/>
</dbReference>
<dbReference type="GO" id="GO:0071944">
    <property type="term" value="C:cell periphery"/>
    <property type="evidence" value="ECO:0000266"/>
    <property type="project" value="RGD"/>
</dbReference>
<dbReference type="GO" id="GO:0042995">
    <property type="term" value="C:cell projection"/>
    <property type="evidence" value="ECO:0000266"/>
    <property type="project" value="RGD"/>
</dbReference>
<dbReference type="GO" id="GO:0005911">
    <property type="term" value="C:cell-cell junction"/>
    <property type="evidence" value="ECO:0000266"/>
    <property type="project" value="RGD"/>
</dbReference>
<dbReference type="GO" id="GO:0005813">
    <property type="term" value="C:centrosome"/>
    <property type="evidence" value="ECO:0000266"/>
    <property type="project" value="RGD"/>
</dbReference>
<dbReference type="GO" id="GO:0005737">
    <property type="term" value="C:cytoplasm"/>
    <property type="evidence" value="ECO:0000266"/>
    <property type="project" value="RGD"/>
</dbReference>
<dbReference type="GO" id="GO:0036464">
    <property type="term" value="C:cytoplasmic ribonucleoprotein granule"/>
    <property type="evidence" value="ECO:0000266"/>
    <property type="project" value="RGD"/>
</dbReference>
<dbReference type="GO" id="GO:0005829">
    <property type="term" value="C:cytosol"/>
    <property type="evidence" value="ECO:0000266"/>
    <property type="project" value="RGD"/>
</dbReference>
<dbReference type="GO" id="GO:0030425">
    <property type="term" value="C:dendrite"/>
    <property type="evidence" value="ECO:0007669"/>
    <property type="project" value="UniProtKB-SubCell"/>
</dbReference>
<dbReference type="GO" id="GO:0030175">
    <property type="term" value="C:filopodium"/>
    <property type="evidence" value="ECO:0000266"/>
    <property type="project" value="RGD"/>
</dbReference>
<dbReference type="GO" id="GO:0098978">
    <property type="term" value="C:glutamatergic synapse"/>
    <property type="evidence" value="ECO:0000266"/>
    <property type="project" value="RGD"/>
</dbReference>
<dbReference type="GO" id="GO:0000139">
    <property type="term" value="C:Golgi membrane"/>
    <property type="evidence" value="ECO:0000314"/>
    <property type="project" value="BHF-UCL"/>
</dbReference>
<dbReference type="GO" id="GO:0017119">
    <property type="term" value="C:Golgi transport complex"/>
    <property type="evidence" value="ECO:0000266"/>
    <property type="project" value="RGD"/>
</dbReference>
<dbReference type="GO" id="GO:0031258">
    <property type="term" value="C:lamellipodium membrane"/>
    <property type="evidence" value="ECO:0007669"/>
    <property type="project" value="UniProtKB-SubCell"/>
</dbReference>
<dbReference type="GO" id="GO:0031256">
    <property type="term" value="C:leading edge membrane"/>
    <property type="evidence" value="ECO:0000266"/>
    <property type="project" value="RGD"/>
</dbReference>
<dbReference type="GO" id="GO:0016020">
    <property type="term" value="C:membrane"/>
    <property type="evidence" value="ECO:0000250"/>
    <property type="project" value="UniProtKB"/>
</dbReference>
<dbReference type="GO" id="GO:0030496">
    <property type="term" value="C:midbody"/>
    <property type="evidence" value="ECO:0000250"/>
    <property type="project" value="UniProtKB"/>
</dbReference>
<dbReference type="GO" id="GO:0072686">
    <property type="term" value="C:mitotic spindle"/>
    <property type="evidence" value="ECO:0000250"/>
    <property type="project" value="UniProtKB"/>
</dbReference>
<dbReference type="GO" id="GO:0043005">
    <property type="term" value="C:neuron projection"/>
    <property type="evidence" value="ECO:0000266"/>
    <property type="project" value="RGD"/>
</dbReference>
<dbReference type="GO" id="GO:0043025">
    <property type="term" value="C:neuronal cell body"/>
    <property type="evidence" value="ECO:0000266"/>
    <property type="project" value="RGD"/>
</dbReference>
<dbReference type="GO" id="GO:0045335">
    <property type="term" value="C:phagocytic vesicle"/>
    <property type="evidence" value="ECO:0000266"/>
    <property type="project" value="RGD"/>
</dbReference>
<dbReference type="GO" id="GO:0005886">
    <property type="term" value="C:plasma membrane"/>
    <property type="evidence" value="ECO:0000314"/>
    <property type="project" value="UniProtKB"/>
</dbReference>
<dbReference type="GO" id="GO:0098794">
    <property type="term" value="C:postsynapse"/>
    <property type="evidence" value="ECO:0000266"/>
    <property type="project" value="RGD"/>
</dbReference>
<dbReference type="GO" id="GO:0032991">
    <property type="term" value="C:protein-containing complex"/>
    <property type="evidence" value="ECO:0000266"/>
    <property type="project" value="RGD"/>
</dbReference>
<dbReference type="GO" id="GO:0098685">
    <property type="term" value="C:Schaffer collateral - CA1 synapse"/>
    <property type="evidence" value="ECO:0000314"/>
    <property type="project" value="SynGO"/>
</dbReference>
<dbReference type="GO" id="GO:0030141">
    <property type="term" value="C:secretory granule"/>
    <property type="evidence" value="ECO:0000314"/>
    <property type="project" value="UniProtKB"/>
</dbReference>
<dbReference type="GO" id="GO:0051233">
    <property type="term" value="C:spindle midzone"/>
    <property type="evidence" value="ECO:0000250"/>
    <property type="project" value="UniProtKB"/>
</dbReference>
<dbReference type="GO" id="GO:0000322">
    <property type="term" value="C:storage vacuole"/>
    <property type="evidence" value="ECO:0000266"/>
    <property type="project" value="RGD"/>
</dbReference>
<dbReference type="GO" id="GO:0034191">
    <property type="term" value="F:apolipoprotein A-I receptor binding"/>
    <property type="evidence" value="ECO:0000266"/>
    <property type="project" value="RGD"/>
</dbReference>
<dbReference type="GO" id="GO:0003925">
    <property type="term" value="F:G protein activity"/>
    <property type="evidence" value="ECO:0007669"/>
    <property type="project" value="UniProtKB-EC"/>
</dbReference>
<dbReference type="GO" id="GO:0032427">
    <property type="term" value="F:GBD domain binding"/>
    <property type="evidence" value="ECO:0000266"/>
    <property type="project" value="RGD"/>
</dbReference>
<dbReference type="GO" id="GO:0005525">
    <property type="term" value="F:GTP binding"/>
    <property type="evidence" value="ECO:0000314"/>
    <property type="project" value="RGD"/>
</dbReference>
<dbReference type="GO" id="GO:0030742">
    <property type="term" value="F:GTP-dependent protein binding"/>
    <property type="evidence" value="ECO:0000266"/>
    <property type="project" value="RGD"/>
</dbReference>
<dbReference type="GO" id="GO:0003924">
    <property type="term" value="F:GTPase activity"/>
    <property type="evidence" value="ECO:0000266"/>
    <property type="project" value="RGD"/>
</dbReference>
<dbReference type="GO" id="GO:0042802">
    <property type="term" value="F:identical protein binding"/>
    <property type="evidence" value="ECO:0000266"/>
    <property type="project" value="RGD"/>
</dbReference>
<dbReference type="GO" id="GO:0031435">
    <property type="term" value="F:mitogen-activated protein kinase kinase kinase binding"/>
    <property type="evidence" value="ECO:0000353"/>
    <property type="project" value="RGD"/>
</dbReference>
<dbReference type="GO" id="GO:0019901">
    <property type="term" value="F:protein kinase binding"/>
    <property type="evidence" value="ECO:0000266"/>
    <property type="project" value="RGD"/>
</dbReference>
<dbReference type="GO" id="GO:0031996">
    <property type="term" value="F:thioesterase binding"/>
    <property type="evidence" value="ECO:0000266"/>
    <property type="project" value="RGD"/>
</dbReference>
<dbReference type="GO" id="GO:0061630">
    <property type="term" value="F:ubiquitin protein ligase activity"/>
    <property type="evidence" value="ECO:0000266"/>
    <property type="project" value="RGD"/>
</dbReference>
<dbReference type="GO" id="GO:0030036">
    <property type="term" value="P:actin cytoskeleton organization"/>
    <property type="evidence" value="ECO:0000266"/>
    <property type="project" value="RGD"/>
</dbReference>
<dbReference type="GO" id="GO:0090135">
    <property type="term" value="P:actin filament branching"/>
    <property type="evidence" value="ECO:0000315"/>
    <property type="project" value="RGD"/>
</dbReference>
<dbReference type="GO" id="GO:0007015">
    <property type="term" value="P:actin filament organization"/>
    <property type="evidence" value="ECO:0000315"/>
    <property type="project" value="RGD"/>
</dbReference>
<dbReference type="GO" id="GO:0034332">
    <property type="term" value="P:adherens junction organization"/>
    <property type="evidence" value="ECO:0000266"/>
    <property type="project" value="RGD"/>
</dbReference>
<dbReference type="GO" id="GO:0003161">
    <property type="term" value="P:cardiac conduction system development"/>
    <property type="evidence" value="ECO:0000266"/>
    <property type="project" value="RGD"/>
</dbReference>
<dbReference type="GO" id="GO:0003253">
    <property type="term" value="P:cardiac neural crest cell migration involved in outflow tract morphogenesis"/>
    <property type="evidence" value="ECO:0000266"/>
    <property type="project" value="RGD"/>
</dbReference>
<dbReference type="GO" id="GO:0034329">
    <property type="term" value="P:cell junction assembly"/>
    <property type="evidence" value="ECO:0000250"/>
    <property type="project" value="UniProtKB"/>
</dbReference>
<dbReference type="GO" id="GO:0071346">
    <property type="term" value="P:cellular response to type II interferon"/>
    <property type="evidence" value="ECO:0000266"/>
    <property type="project" value="RGD"/>
</dbReference>
<dbReference type="GO" id="GO:0036336">
    <property type="term" value="P:dendritic cell migration"/>
    <property type="evidence" value="ECO:0000266"/>
    <property type="project" value="RGD"/>
</dbReference>
<dbReference type="GO" id="GO:0060997">
    <property type="term" value="P:dendritic spine morphogenesis"/>
    <property type="evidence" value="ECO:0000250"/>
    <property type="project" value="UniProtKB"/>
</dbReference>
<dbReference type="GO" id="GO:0035050">
    <property type="term" value="P:embryonic heart tube development"/>
    <property type="evidence" value="ECO:0000266"/>
    <property type="project" value="RGD"/>
</dbReference>
<dbReference type="GO" id="GO:0006897">
    <property type="term" value="P:endocytosis"/>
    <property type="evidence" value="ECO:0000266"/>
    <property type="project" value="RGD"/>
</dbReference>
<dbReference type="GO" id="GO:0086101">
    <property type="term" value="P:endothelin receptor signaling pathway involved in heart process"/>
    <property type="evidence" value="ECO:0000266"/>
    <property type="project" value="RGD"/>
</dbReference>
<dbReference type="GO" id="GO:0030010">
    <property type="term" value="P:establishment of cell polarity"/>
    <property type="evidence" value="ECO:0000318"/>
    <property type="project" value="GO_Central"/>
</dbReference>
<dbReference type="GO" id="GO:0045198">
    <property type="term" value="P:establishment of epithelial cell apical/basal polarity"/>
    <property type="evidence" value="ECO:0000250"/>
    <property type="project" value="UniProtKB"/>
</dbReference>
<dbReference type="GO" id="GO:0051683">
    <property type="term" value="P:establishment of Golgi localization"/>
    <property type="evidence" value="ECO:0000315"/>
    <property type="project" value="BHF-UCL"/>
</dbReference>
<dbReference type="GO" id="GO:0051649">
    <property type="term" value="P:establishment of localization in cell"/>
    <property type="evidence" value="ECO:0000266"/>
    <property type="project" value="RGD"/>
</dbReference>
<dbReference type="GO" id="GO:0035088">
    <property type="term" value="P:establishment or maintenance of apical/basal cell polarity"/>
    <property type="evidence" value="ECO:0000266"/>
    <property type="project" value="RGD"/>
</dbReference>
<dbReference type="GO" id="GO:0046847">
    <property type="term" value="P:filopodium assembly"/>
    <property type="evidence" value="ECO:0000266"/>
    <property type="project" value="RGD"/>
</dbReference>
<dbReference type="GO" id="GO:0007030">
    <property type="term" value="P:Golgi organization"/>
    <property type="evidence" value="ECO:0000315"/>
    <property type="project" value="BHF-UCL"/>
</dbReference>
<dbReference type="GO" id="GO:0060047">
    <property type="term" value="P:heart contraction"/>
    <property type="evidence" value="ECO:0000266"/>
    <property type="project" value="RGD"/>
</dbReference>
<dbReference type="GO" id="GO:0003015">
    <property type="term" value="P:heart process"/>
    <property type="evidence" value="ECO:0000266"/>
    <property type="project" value="RGD"/>
</dbReference>
<dbReference type="GO" id="GO:0007229">
    <property type="term" value="P:integrin-mediated signaling pathway"/>
    <property type="evidence" value="ECO:0000266"/>
    <property type="project" value="RGD"/>
</dbReference>
<dbReference type="GO" id="GO:0031333">
    <property type="term" value="P:negative regulation of protein-containing complex assembly"/>
    <property type="evidence" value="ECO:0000266"/>
    <property type="project" value="RGD"/>
</dbReference>
<dbReference type="GO" id="GO:0048664">
    <property type="term" value="P:neuron fate determination"/>
    <property type="evidence" value="ECO:0000266"/>
    <property type="project" value="RGD"/>
</dbReference>
<dbReference type="GO" id="GO:0038189">
    <property type="term" value="P:neuropilin signaling pathway"/>
    <property type="evidence" value="ECO:0000266"/>
    <property type="project" value="RGD"/>
</dbReference>
<dbReference type="GO" id="GO:0007097">
    <property type="term" value="P:nuclear migration"/>
    <property type="evidence" value="ECO:0000266"/>
    <property type="project" value="RGD"/>
</dbReference>
<dbReference type="GO" id="GO:0051647">
    <property type="term" value="P:nucleus localization"/>
    <property type="evidence" value="ECO:0000266"/>
    <property type="project" value="RGD"/>
</dbReference>
<dbReference type="GO" id="GO:0072384">
    <property type="term" value="P:organelle transport along microtubule"/>
    <property type="evidence" value="ECO:0000315"/>
    <property type="project" value="BHF-UCL"/>
</dbReference>
<dbReference type="GO" id="GO:0006911">
    <property type="term" value="P:phagocytosis, engulfment"/>
    <property type="evidence" value="ECO:0000250"/>
    <property type="project" value="UniProtKB"/>
</dbReference>
<dbReference type="GO" id="GO:0030307">
    <property type="term" value="P:positive regulation of cell growth"/>
    <property type="evidence" value="ECO:0000266"/>
    <property type="project" value="RGD"/>
</dbReference>
<dbReference type="GO" id="GO:0030335">
    <property type="term" value="P:positive regulation of cell migration"/>
    <property type="evidence" value="ECO:0000266"/>
    <property type="project" value="RGD"/>
</dbReference>
<dbReference type="GO" id="GO:0032467">
    <property type="term" value="P:positive regulation of cytokinesis"/>
    <property type="evidence" value="ECO:0000250"/>
    <property type="project" value="UniProtKB"/>
</dbReference>
<dbReference type="GO" id="GO:0045740">
    <property type="term" value="P:positive regulation of DNA replication"/>
    <property type="evidence" value="ECO:0000315"/>
    <property type="project" value="RGD"/>
</dbReference>
<dbReference type="GO" id="GO:0060501">
    <property type="term" value="P:positive regulation of epithelial cell proliferation involved in lung morphogenesis"/>
    <property type="evidence" value="ECO:0000266"/>
    <property type="project" value="RGD"/>
</dbReference>
<dbReference type="GO" id="GO:0051491">
    <property type="term" value="P:positive regulation of filopodium assembly"/>
    <property type="evidence" value="ECO:0000250"/>
    <property type="project" value="UniProtKB"/>
</dbReference>
<dbReference type="GO" id="GO:0090316">
    <property type="term" value="P:positive regulation of intracellular protein transport"/>
    <property type="evidence" value="ECO:0000315"/>
    <property type="project" value="RGD"/>
</dbReference>
<dbReference type="GO" id="GO:0046330">
    <property type="term" value="P:positive regulation of JNK cascade"/>
    <property type="evidence" value="ECO:0000314"/>
    <property type="project" value="RGD"/>
</dbReference>
<dbReference type="GO" id="GO:0010592">
    <property type="term" value="P:positive regulation of lamellipodium assembly"/>
    <property type="evidence" value="ECO:0000266"/>
    <property type="project" value="RGD"/>
</dbReference>
<dbReference type="GO" id="GO:0043410">
    <property type="term" value="P:positive regulation of MAPK cascade"/>
    <property type="evidence" value="ECO:0000266"/>
    <property type="project" value="RGD"/>
</dbReference>
<dbReference type="GO" id="GO:0043525">
    <property type="term" value="P:positive regulation of neuron apoptotic process"/>
    <property type="evidence" value="ECO:0000315"/>
    <property type="project" value="RGD"/>
</dbReference>
<dbReference type="GO" id="GO:0051897">
    <property type="term" value="P:positive regulation of phosphatidylinositol 3-kinase/protein kinase B signal transduction"/>
    <property type="evidence" value="ECO:0000266"/>
    <property type="project" value="RGD"/>
</dbReference>
<dbReference type="GO" id="GO:0048549">
    <property type="term" value="P:positive regulation of pinocytosis"/>
    <property type="evidence" value="ECO:0000250"/>
    <property type="project" value="UniProtKB"/>
</dbReference>
<dbReference type="GO" id="GO:0031274">
    <property type="term" value="P:positive regulation of pseudopodium assembly"/>
    <property type="evidence" value="ECO:0000266"/>
    <property type="project" value="RGD"/>
</dbReference>
<dbReference type="GO" id="GO:0051496">
    <property type="term" value="P:positive regulation of stress fiber assembly"/>
    <property type="evidence" value="ECO:0000266"/>
    <property type="project" value="RGD"/>
</dbReference>
<dbReference type="GO" id="GO:1900026">
    <property type="term" value="P:positive regulation of substrate adhesion-dependent cell spreading"/>
    <property type="evidence" value="ECO:0000250"/>
    <property type="project" value="UniProtKB"/>
</dbReference>
<dbReference type="GO" id="GO:0051835">
    <property type="term" value="P:positive regulation of synapse structural plasticity"/>
    <property type="evidence" value="ECO:0000315"/>
    <property type="project" value="RGD"/>
</dbReference>
<dbReference type="GO" id="GO:0008104">
    <property type="term" value="P:protein localization"/>
    <property type="evidence" value="ECO:0000266"/>
    <property type="project" value="RGD"/>
</dbReference>
<dbReference type="GO" id="GO:0032956">
    <property type="term" value="P:regulation of actin cytoskeleton organization"/>
    <property type="evidence" value="ECO:0000266"/>
    <property type="project" value="RGD"/>
</dbReference>
<dbReference type="GO" id="GO:0051988">
    <property type="term" value="P:regulation of attachment of spindle microtubules to kinetochore"/>
    <property type="evidence" value="ECO:0000250"/>
    <property type="project" value="UniProtKB"/>
</dbReference>
<dbReference type="GO" id="GO:0017157">
    <property type="term" value="P:regulation of exocytosis"/>
    <property type="evidence" value="ECO:0000304"/>
    <property type="project" value="UniProtKB"/>
</dbReference>
<dbReference type="GO" id="GO:0051489">
    <property type="term" value="P:regulation of filopodium assembly"/>
    <property type="evidence" value="ECO:0000250"/>
    <property type="project" value="UniProtKB"/>
</dbReference>
<dbReference type="GO" id="GO:0010591">
    <property type="term" value="P:regulation of lamellipodium assembly"/>
    <property type="evidence" value="ECO:0000266"/>
    <property type="project" value="RGD"/>
</dbReference>
<dbReference type="GO" id="GO:0007088">
    <property type="term" value="P:regulation of mitotic nuclear division"/>
    <property type="evidence" value="ECO:0000266"/>
    <property type="project" value="RGD"/>
</dbReference>
<dbReference type="GO" id="GO:0099159">
    <property type="term" value="P:regulation of modification of postsynaptic structure"/>
    <property type="evidence" value="ECO:0000314"/>
    <property type="project" value="SynGO"/>
</dbReference>
<dbReference type="GO" id="GO:0099175">
    <property type="term" value="P:regulation of postsynapse organization"/>
    <property type="evidence" value="ECO:0000266"/>
    <property type="project" value="RGD"/>
</dbReference>
<dbReference type="GO" id="GO:0051492">
    <property type="term" value="P:regulation of stress fiber assembly"/>
    <property type="evidence" value="ECO:0000266"/>
    <property type="project" value="RGD"/>
</dbReference>
<dbReference type="GO" id="GO:0009749">
    <property type="term" value="P:response to glucose"/>
    <property type="evidence" value="ECO:0000304"/>
    <property type="project" value="UniProtKB"/>
</dbReference>
<dbReference type="GO" id="GO:0007165">
    <property type="term" value="P:signal transduction"/>
    <property type="evidence" value="ECO:0000318"/>
    <property type="project" value="GO_Central"/>
</dbReference>
<dbReference type="GO" id="GO:0007264">
    <property type="term" value="P:small GTPase-mediated signal transduction"/>
    <property type="evidence" value="ECO:0007669"/>
    <property type="project" value="InterPro"/>
</dbReference>
<dbReference type="GO" id="GO:0002040">
    <property type="term" value="P:sprouting angiogenesis"/>
    <property type="evidence" value="ECO:0000315"/>
    <property type="project" value="RGD"/>
</dbReference>
<dbReference type="GO" id="GO:0060661">
    <property type="term" value="P:submandibular salivary gland formation"/>
    <property type="evidence" value="ECO:0000270"/>
    <property type="project" value="RGD"/>
</dbReference>
<dbReference type="CDD" id="cd01874">
    <property type="entry name" value="Cdc42"/>
    <property type="match status" value="1"/>
</dbReference>
<dbReference type="FunFam" id="3.40.50.300:FF:000167">
    <property type="entry name" value="Cell division control protein 42 homolog"/>
    <property type="match status" value="1"/>
</dbReference>
<dbReference type="Gene3D" id="3.40.50.300">
    <property type="entry name" value="P-loop containing nucleotide triphosphate hydrolases"/>
    <property type="match status" value="1"/>
</dbReference>
<dbReference type="InterPro" id="IPR037874">
    <property type="entry name" value="Cdc42"/>
</dbReference>
<dbReference type="InterPro" id="IPR027417">
    <property type="entry name" value="P-loop_NTPase"/>
</dbReference>
<dbReference type="InterPro" id="IPR005225">
    <property type="entry name" value="Small_GTP-bd"/>
</dbReference>
<dbReference type="InterPro" id="IPR001806">
    <property type="entry name" value="Small_GTPase"/>
</dbReference>
<dbReference type="InterPro" id="IPR003578">
    <property type="entry name" value="Small_GTPase_Rho"/>
</dbReference>
<dbReference type="NCBIfam" id="TIGR00231">
    <property type="entry name" value="small_GTP"/>
    <property type="match status" value="1"/>
</dbReference>
<dbReference type="PANTHER" id="PTHR24072">
    <property type="entry name" value="RHO FAMILY GTPASE"/>
    <property type="match status" value="1"/>
</dbReference>
<dbReference type="Pfam" id="PF00071">
    <property type="entry name" value="Ras"/>
    <property type="match status" value="1"/>
</dbReference>
<dbReference type="PRINTS" id="PR00449">
    <property type="entry name" value="RASTRNSFRMNG"/>
</dbReference>
<dbReference type="SMART" id="SM00175">
    <property type="entry name" value="RAB"/>
    <property type="match status" value="1"/>
</dbReference>
<dbReference type="SMART" id="SM00173">
    <property type="entry name" value="RAS"/>
    <property type="match status" value="1"/>
</dbReference>
<dbReference type="SMART" id="SM00174">
    <property type="entry name" value="RHO"/>
    <property type="match status" value="1"/>
</dbReference>
<dbReference type="SUPFAM" id="SSF52540">
    <property type="entry name" value="P-loop containing nucleoside triphosphate hydrolases"/>
    <property type="match status" value="1"/>
</dbReference>
<dbReference type="PROSITE" id="PS51420">
    <property type="entry name" value="RHO"/>
    <property type="match status" value="1"/>
</dbReference>
<keyword id="KW-0025">Alternative splicing</keyword>
<keyword id="KW-1003">Cell membrane</keyword>
<keyword id="KW-0966">Cell projection</keyword>
<keyword id="KW-0963">Cytoplasm</keyword>
<keyword id="KW-0206">Cytoskeleton</keyword>
<keyword id="KW-0221">Differentiation</keyword>
<keyword id="KW-0903">Direct protein sequencing</keyword>
<keyword id="KW-0342">GTP-binding</keyword>
<keyword id="KW-0378">Hydrolase</keyword>
<keyword id="KW-0449">Lipoprotein</keyword>
<keyword id="KW-0472">Membrane</keyword>
<keyword id="KW-0488">Methylation</keyword>
<keyword id="KW-0524">Neurogenesis</keyword>
<keyword id="KW-0547">Nucleotide-binding</keyword>
<keyword id="KW-0597">Phosphoprotein</keyword>
<keyword id="KW-0636">Prenylation</keyword>
<keyword id="KW-1185">Reference proteome</keyword>
<gene>
    <name evidence="11" type="primary">Cdc42</name>
</gene>
<accession>Q8CFN2</accession>
<accession>Q6P9Y3</accession>
<accession>Q71TW5</accession>
<reference key="1">
    <citation type="journal article" date="2000" name="Exp. Mol. Med.">
        <title>Molecular cloning and sequencing of rat Cdc42 GTPase cDNA.</title>
        <authorList>
            <person name="Han J.-S."/>
            <person name="Kim J.-H."/>
            <person name="Kim J.G."/>
            <person name="Park J.-B."/>
            <person name="Noh D.-Y."/>
            <person name="Lee K.-H."/>
        </authorList>
    </citation>
    <scope>NUCLEOTIDE SEQUENCE [MRNA] (ISOFORM 2)</scope>
    <source>
        <tissue>Brain</tissue>
    </source>
</reference>
<reference key="2">
    <citation type="submission" date="2002-03" db="EMBL/GenBank/DDBJ databases">
        <title>The cdc42 plays a protective role in the brain ischemia.</title>
        <authorList>
            <person name="Chen D."/>
            <person name="Manabu M."/>
            <person name="Lan J."/>
            <person name="Jin J."/>
            <person name="Simon R.P."/>
        </authorList>
    </citation>
    <scope>NUCLEOTIDE SEQUENCE [MRNA] (ISOFORM 1)</scope>
    <source>
        <tissue>Hippocampus</tissue>
    </source>
</reference>
<reference key="3">
    <citation type="journal article" date="2004" name="Genome Res.">
        <title>The status, quality, and expansion of the NIH full-length cDNA project: the Mammalian Gene Collection (MGC).</title>
        <authorList>
            <consortium name="The MGC Project Team"/>
        </authorList>
    </citation>
    <scope>NUCLEOTIDE SEQUENCE [LARGE SCALE MRNA] (ISOFORM 1)</scope>
    <source>
        <tissue>Pituitary</tissue>
    </source>
</reference>
<reference key="4">
    <citation type="submission" date="2007-07" db="UniProtKB">
        <authorList>
            <person name="Lubec G."/>
            <person name="Afjehi-Sadat L."/>
            <person name="Kang S.U."/>
        </authorList>
    </citation>
    <scope>PROTEIN SEQUENCE OF 6-16; 108-120 AND 167-183</scope>
    <scope>IDENTIFICATION BY MASS SPECTROMETRY</scope>
    <source>
        <strain>Sprague-Dawley</strain>
        <tissue>Brain</tissue>
        <tissue>Spinal cord</tissue>
    </source>
</reference>
<reference key="5">
    <citation type="journal article" date="2011" name="Nature">
        <title>Local, persistent activation of Rho GTPases during plasticity of single dendritic spines.</title>
        <authorList>
            <person name="Murakoshi H."/>
            <person name="Wang H."/>
            <person name="Yasuda R."/>
        </authorList>
    </citation>
    <scope>FUNCTION</scope>
    <scope>SUBCELLULAR LOCATION</scope>
</reference>
<reference key="6">
    <citation type="journal article" date="2014" name="Elife">
        <title>Dynamic recruitment of the curvature-sensitive protein ArhGAP44 to nanoscale membrane deformations limits exploratory filopodia initiation in neurons.</title>
        <authorList>
            <person name="Galic M."/>
            <person name="Tsai F.C."/>
            <person name="Collins S.R."/>
            <person name="Matis M."/>
            <person name="Bandara S."/>
            <person name="Meyer T."/>
        </authorList>
    </citation>
    <scope>FUNCTION</scope>
    <scope>CATALYTIC ACTIVITY</scope>
    <scope>ACTIVITY REGULATION</scope>
</reference>